<accession>B5XYE1</accession>
<name>DCUP_KLEP3</name>
<keyword id="KW-0963">Cytoplasm</keyword>
<keyword id="KW-0210">Decarboxylase</keyword>
<keyword id="KW-0456">Lyase</keyword>
<keyword id="KW-0627">Porphyrin biosynthesis</keyword>
<comment type="function">
    <text evidence="1">Catalyzes the decarboxylation of four acetate groups of uroporphyrinogen-III to yield coproporphyrinogen-III.</text>
</comment>
<comment type="catalytic activity">
    <reaction evidence="1">
        <text>uroporphyrinogen III + 4 H(+) = coproporphyrinogen III + 4 CO2</text>
        <dbReference type="Rhea" id="RHEA:19865"/>
        <dbReference type="ChEBI" id="CHEBI:15378"/>
        <dbReference type="ChEBI" id="CHEBI:16526"/>
        <dbReference type="ChEBI" id="CHEBI:57308"/>
        <dbReference type="ChEBI" id="CHEBI:57309"/>
        <dbReference type="EC" id="4.1.1.37"/>
    </reaction>
</comment>
<comment type="pathway">
    <text evidence="1">Porphyrin-containing compound metabolism; protoporphyrin-IX biosynthesis; coproporphyrinogen-III from 5-aminolevulinate: step 4/4.</text>
</comment>
<comment type="subunit">
    <text evidence="1">Homodimer.</text>
</comment>
<comment type="subcellular location">
    <subcellularLocation>
        <location evidence="1">Cytoplasm</location>
    </subcellularLocation>
</comment>
<comment type="similarity">
    <text evidence="1">Belongs to the uroporphyrinogen decarboxylase family.</text>
</comment>
<feature type="chain" id="PRO_1000100000" description="Uroporphyrinogen decarboxylase">
    <location>
        <begin position="1"/>
        <end position="354"/>
    </location>
</feature>
<feature type="binding site" evidence="1">
    <location>
        <begin position="27"/>
        <end position="31"/>
    </location>
    <ligand>
        <name>substrate</name>
    </ligand>
</feature>
<feature type="binding site" evidence="1">
    <location>
        <position position="77"/>
    </location>
    <ligand>
        <name>substrate</name>
    </ligand>
</feature>
<feature type="binding site" evidence="1">
    <location>
        <position position="154"/>
    </location>
    <ligand>
        <name>substrate</name>
    </ligand>
</feature>
<feature type="binding site" evidence="1">
    <location>
        <position position="209"/>
    </location>
    <ligand>
        <name>substrate</name>
    </ligand>
</feature>
<feature type="binding site" evidence="1">
    <location>
        <position position="327"/>
    </location>
    <ligand>
        <name>substrate</name>
    </ligand>
</feature>
<feature type="site" description="Transition state stabilizer" evidence="1">
    <location>
        <position position="77"/>
    </location>
</feature>
<proteinExistence type="inferred from homology"/>
<reference key="1">
    <citation type="journal article" date="2008" name="PLoS Genet.">
        <title>Complete genome sequence of the N2-fixing broad host range endophyte Klebsiella pneumoniae 342 and virulence predictions verified in mice.</title>
        <authorList>
            <person name="Fouts D.E."/>
            <person name="Tyler H.L."/>
            <person name="DeBoy R.T."/>
            <person name="Daugherty S."/>
            <person name="Ren Q."/>
            <person name="Badger J.H."/>
            <person name="Durkin A.S."/>
            <person name="Huot H."/>
            <person name="Shrivastava S."/>
            <person name="Kothari S."/>
            <person name="Dodson R.J."/>
            <person name="Mohamoud Y."/>
            <person name="Khouri H."/>
            <person name="Roesch L.F.W."/>
            <person name="Krogfelt K.A."/>
            <person name="Struve C."/>
            <person name="Triplett E.W."/>
            <person name="Methe B.A."/>
        </authorList>
    </citation>
    <scope>NUCLEOTIDE SEQUENCE [LARGE SCALE GENOMIC DNA]</scope>
    <source>
        <strain>342</strain>
    </source>
</reference>
<gene>
    <name evidence="1" type="primary">hemE</name>
    <name type="ordered locus">KPK_5295</name>
</gene>
<evidence type="ECO:0000255" key="1">
    <source>
        <dbReference type="HAMAP-Rule" id="MF_00218"/>
    </source>
</evidence>
<organism>
    <name type="scientific">Klebsiella pneumoniae (strain 342)</name>
    <dbReference type="NCBI Taxonomy" id="507522"/>
    <lineage>
        <taxon>Bacteria</taxon>
        <taxon>Pseudomonadati</taxon>
        <taxon>Pseudomonadota</taxon>
        <taxon>Gammaproteobacteria</taxon>
        <taxon>Enterobacterales</taxon>
        <taxon>Enterobacteriaceae</taxon>
        <taxon>Klebsiella/Raoultella group</taxon>
        <taxon>Klebsiella</taxon>
        <taxon>Klebsiella pneumoniae complex</taxon>
    </lineage>
</organism>
<dbReference type="EC" id="4.1.1.37" evidence="1"/>
<dbReference type="EMBL" id="CP000964">
    <property type="protein sequence ID" value="ACI09344.1"/>
    <property type="molecule type" value="Genomic_DNA"/>
</dbReference>
<dbReference type="SMR" id="B5XYE1"/>
<dbReference type="KEGG" id="kpe:KPK_5295"/>
<dbReference type="HOGENOM" id="CLU_040933_0_0_6"/>
<dbReference type="UniPathway" id="UPA00251">
    <property type="reaction ID" value="UER00321"/>
</dbReference>
<dbReference type="Proteomes" id="UP000001734">
    <property type="component" value="Chromosome"/>
</dbReference>
<dbReference type="GO" id="GO:0005829">
    <property type="term" value="C:cytosol"/>
    <property type="evidence" value="ECO:0007669"/>
    <property type="project" value="TreeGrafter"/>
</dbReference>
<dbReference type="GO" id="GO:0004853">
    <property type="term" value="F:uroporphyrinogen decarboxylase activity"/>
    <property type="evidence" value="ECO:0007669"/>
    <property type="project" value="UniProtKB-UniRule"/>
</dbReference>
<dbReference type="GO" id="GO:0019353">
    <property type="term" value="P:protoporphyrinogen IX biosynthetic process from glutamate"/>
    <property type="evidence" value="ECO:0007669"/>
    <property type="project" value="TreeGrafter"/>
</dbReference>
<dbReference type="CDD" id="cd00717">
    <property type="entry name" value="URO-D"/>
    <property type="match status" value="1"/>
</dbReference>
<dbReference type="FunFam" id="3.20.20.210:FF:000001">
    <property type="entry name" value="Uroporphyrinogen decarboxylase"/>
    <property type="match status" value="1"/>
</dbReference>
<dbReference type="Gene3D" id="3.20.20.210">
    <property type="match status" value="1"/>
</dbReference>
<dbReference type="HAMAP" id="MF_00218">
    <property type="entry name" value="URO_D"/>
    <property type="match status" value="1"/>
</dbReference>
<dbReference type="InterPro" id="IPR038071">
    <property type="entry name" value="UROD/MetE-like_sf"/>
</dbReference>
<dbReference type="InterPro" id="IPR006361">
    <property type="entry name" value="Uroporphyrinogen_deCO2ase_HemE"/>
</dbReference>
<dbReference type="InterPro" id="IPR000257">
    <property type="entry name" value="Uroporphyrinogen_deCOase"/>
</dbReference>
<dbReference type="NCBIfam" id="TIGR01464">
    <property type="entry name" value="hemE"/>
    <property type="match status" value="1"/>
</dbReference>
<dbReference type="PANTHER" id="PTHR21091">
    <property type="entry name" value="METHYLTETRAHYDROFOLATE:HOMOCYSTEINE METHYLTRANSFERASE RELATED"/>
    <property type="match status" value="1"/>
</dbReference>
<dbReference type="PANTHER" id="PTHR21091:SF169">
    <property type="entry name" value="UROPORPHYRINOGEN DECARBOXYLASE"/>
    <property type="match status" value="1"/>
</dbReference>
<dbReference type="Pfam" id="PF01208">
    <property type="entry name" value="URO-D"/>
    <property type="match status" value="1"/>
</dbReference>
<dbReference type="SUPFAM" id="SSF51726">
    <property type="entry name" value="UROD/MetE-like"/>
    <property type="match status" value="1"/>
</dbReference>
<dbReference type="PROSITE" id="PS00906">
    <property type="entry name" value="UROD_1"/>
    <property type="match status" value="1"/>
</dbReference>
<dbReference type="PROSITE" id="PS00907">
    <property type="entry name" value="UROD_2"/>
    <property type="match status" value="1"/>
</dbReference>
<sequence length="354" mass="39302">MTELKNDRYLRALLRQPVDVTPVWMMRQAGRYLPEYKATRAQAGDFMSLCKNAELACEVTLQPLRRYPLDAAILFSDILTIPDAMGLGLYFEAGEGPRFTSPIKSKADVDKLPIPDPEQELGYVMNAVRTIRRELKGEVPLIGFSGSPWTLATYMVEGGSSKAFTVIKKMMYAEPQALHALLEKLAKSVTLYLNAQIKAGAQSVMIFDTWGGVLTGRDYQQFSLYYMHKIVDGLLRENEGRRVPVTLFTKGGGQWLEAMAETGCDALGLDWTTDIADARRRVGHKVALQGNMDPSMLYAPAPRIEEEVATILAGFGQGEGHVFNLGHGIHQDVDPQHAGVFVEAVHRLSTPYHQ</sequence>
<protein>
    <recommendedName>
        <fullName evidence="1">Uroporphyrinogen decarboxylase</fullName>
        <shortName evidence="1">UPD</shortName>
        <shortName evidence="1">URO-D</shortName>
        <ecNumber evidence="1">4.1.1.37</ecNumber>
    </recommendedName>
</protein>